<evidence type="ECO:0000255" key="1">
    <source>
        <dbReference type="HAMAP-Rule" id="MF_00268"/>
    </source>
</evidence>
<organism>
    <name type="scientific">Aromatoleum aromaticum (strain DSM 19018 / LMG 30748 / EbN1)</name>
    <name type="common">Azoarcus sp. (strain EbN1)</name>
    <dbReference type="NCBI Taxonomy" id="76114"/>
    <lineage>
        <taxon>Bacteria</taxon>
        <taxon>Pseudomonadati</taxon>
        <taxon>Pseudomonadota</taxon>
        <taxon>Betaproteobacteria</taxon>
        <taxon>Rhodocyclales</taxon>
        <taxon>Rhodocyclaceae</taxon>
        <taxon>Aromatoleum</taxon>
    </lineage>
</organism>
<comment type="function">
    <text evidence="1">Can catalyze the hydrolysis of ATP in the presence of single-stranded DNA, the ATP-dependent uptake of single-stranded DNA by duplex DNA, and the ATP-dependent hybridization of homologous single-stranded DNAs. It interacts with LexA causing its activation and leading to its autocatalytic cleavage.</text>
</comment>
<comment type="subcellular location">
    <subcellularLocation>
        <location evidence="1">Cytoplasm</location>
    </subcellularLocation>
</comment>
<comment type="similarity">
    <text evidence="1">Belongs to the RecA family.</text>
</comment>
<dbReference type="EMBL" id="CR555306">
    <property type="protein sequence ID" value="CAI08046.1"/>
    <property type="molecule type" value="Genomic_DNA"/>
</dbReference>
<dbReference type="RefSeq" id="WP_011237739.1">
    <property type="nucleotide sequence ID" value="NC_006513.1"/>
</dbReference>
<dbReference type="SMR" id="Q5P3R8"/>
<dbReference type="STRING" id="76114.ebA3396"/>
<dbReference type="KEGG" id="eba:ebA3396"/>
<dbReference type="eggNOG" id="COG0468">
    <property type="taxonomic scope" value="Bacteria"/>
</dbReference>
<dbReference type="HOGENOM" id="CLU_040469_1_2_4"/>
<dbReference type="OrthoDB" id="9776733at2"/>
<dbReference type="Proteomes" id="UP000006552">
    <property type="component" value="Chromosome"/>
</dbReference>
<dbReference type="GO" id="GO:0005829">
    <property type="term" value="C:cytosol"/>
    <property type="evidence" value="ECO:0007669"/>
    <property type="project" value="TreeGrafter"/>
</dbReference>
<dbReference type="GO" id="GO:0005524">
    <property type="term" value="F:ATP binding"/>
    <property type="evidence" value="ECO:0007669"/>
    <property type="project" value="UniProtKB-UniRule"/>
</dbReference>
<dbReference type="GO" id="GO:0016887">
    <property type="term" value="F:ATP hydrolysis activity"/>
    <property type="evidence" value="ECO:0007669"/>
    <property type="project" value="InterPro"/>
</dbReference>
<dbReference type="GO" id="GO:0140664">
    <property type="term" value="F:ATP-dependent DNA damage sensor activity"/>
    <property type="evidence" value="ECO:0007669"/>
    <property type="project" value="InterPro"/>
</dbReference>
<dbReference type="GO" id="GO:0003684">
    <property type="term" value="F:damaged DNA binding"/>
    <property type="evidence" value="ECO:0007669"/>
    <property type="project" value="UniProtKB-UniRule"/>
</dbReference>
<dbReference type="GO" id="GO:0003697">
    <property type="term" value="F:single-stranded DNA binding"/>
    <property type="evidence" value="ECO:0007669"/>
    <property type="project" value="UniProtKB-UniRule"/>
</dbReference>
<dbReference type="GO" id="GO:0006310">
    <property type="term" value="P:DNA recombination"/>
    <property type="evidence" value="ECO:0007669"/>
    <property type="project" value="UniProtKB-UniRule"/>
</dbReference>
<dbReference type="GO" id="GO:0006281">
    <property type="term" value="P:DNA repair"/>
    <property type="evidence" value="ECO:0007669"/>
    <property type="project" value="UniProtKB-UniRule"/>
</dbReference>
<dbReference type="GO" id="GO:0009432">
    <property type="term" value="P:SOS response"/>
    <property type="evidence" value="ECO:0007669"/>
    <property type="project" value="UniProtKB-UniRule"/>
</dbReference>
<dbReference type="CDD" id="cd00983">
    <property type="entry name" value="RecA"/>
    <property type="match status" value="1"/>
</dbReference>
<dbReference type="FunFam" id="3.40.50.300:FF:000087">
    <property type="entry name" value="Recombinase RecA"/>
    <property type="match status" value="1"/>
</dbReference>
<dbReference type="Gene3D" id="3.40.50.300">
    <property type="entry name" value="P-loop containing nucleotide triphosphate hydrolases"/>
    <property type="match status" value="1"/>
</dbReference>
<dbReference type="HAMAP" id="MF_00268">
    <property type="entry name" value="RecA"/>
    <property type="match status" value="1"/>
</dbReference>
<dbReference type="InterPro" id="IPR003593">
    <property type="entry name" value="AAA+_ATPase"/>
</dbReference>
<dbReference type="InterPro" id="IPR013765">
    <property type="entry name" value="DNA_recomb/repair_RecA"/>
</dbReference>
<dbReference type="InterPro" id="IPR020584">
    <property type="entry name" value="DNA_recomb/repair_RecA_CS"/>
</dbReference>
<dbReference type="InterPro" id="IPR027417">
    <property type="entry name" value="P-loop_NTPase"/>
</dbReference>
<dbReference type="InterPro" id="IPR049261">
    <property type="entry name" value="RecA-like_C"/>
</dbReference>
<dbReference type="InterPro" id="IPR049428">
    <property type="entry name" value="RecA-like_N"/>
</dbReference>
<dbReference type="InterPro" id="IPR020588">
    <property type="entry name" value="RecA_ATP-bd"/>
</dbReference>
<dbReference type="InterPro" id="IPR023400">
    <property type="entry name" value="RecA_C_sf"/>
</dbReference>
<dbReference type="InterPro" id="IPR020587">
    <property type="entry name" value="RecA_monomer-monomer_interface"/>
</dbReference>
<dbReference type="NCBIfam" id="TIGR02012">
    <property type="entry name" value="tigrfam_recA"/>
    <property type="match status" value="1"/>
</dbReference>
<dbReference type="PANTHER" id="PTHR45900:SF1">
    <property type="entry name" value="MITOCHONDRIAL DNA REPAIR PROTEIN RECA HOMOLOG-RELATED"/>
    <property type="match status" value="1"/>
</dbReference>
<dbReference type="PANTHER" id="PTHR45900">
    <property type="entry name" value="RECA"/>
    <property type="match status" value="1"/>
</dbReference>
<dbReference type="Pfam" id="PF00154">
    <property type="entry name" value="RecA"/>
    <property type="match status" value="1"/>
</dbReference>
<dbReference type="Pfam" id="PF21096">
    <property type="entry name" value="RecA_C"/>
    <property type="match status" value="1"/>
</dbReference>
<dbReference type="PRINTS" id="PR00142">
    <property type="entry name" value="RECA"/>
</dbReference>
<dbReference type="SMART" id="SM00382">
    <property type="entry name" value="AAA"/>
    <property type="match status" value="1"/>
</dbReference>
<dbReference type="SUPFAM" id="SSF52540">
    <property type="entry name" value="P-loop containing nucleoside triphosphate hydrolases"/>
    <property type="match status" value="1"/>
</dbReference>
<dbReference type="SUPFAM" id="SSF54752">
    <property type="entry name" value="RecA protein, C-terminal domain"/>
    <property type="match status" value="1"/>
</dbReference>
<dbReference type="PROSITE" id="PS00321">
    <property type="entry name" value="RECA_1"/>
    <property type="match status" value="1"/>
</dbReference>
<dbReference type="PROSITE" id="PS50162">
    <property type="entry name" value="RECA_2"/>
    <property type="match status" value="1"/>
</dbReference>
<dbReference type="PROSITE" id="PS50163">
    <property type="entry name" value="RECA_3"/>
    <property type="match status" value="1"/>
</dbReference>
<accession>Q5P3R8</accession>
<keyword id="KW-0067">ATP-binding</keyword>
<keyword id="KW-0963">Cytoplasm</keyword>
<keyword id="KW-0227">DNA damage</keyword>
<keyword id="KW-0233">DNA recombination</keyword>
<keyword id="KW-0234">DNA repair</keyword>
<keyword id="KW-0238">DNA-binding</keyword>
<keyword id="KW-0547">Nucleotide-binding</keyword>
<keyword id="KW-1185">Reference proteome</keyword>
<keyword id="KW-0742">SOS response</keyword>
<sequence length="346" mass="36954">MDDNKAKALAAALSQIEKQFGKGSIMRMGDGTIERDIQTVSTGSLGLDIALGLGGLPRGRVVEIYGPESSGKTTLTLQVIAEMQKLGGTAAFIDAEHALDVGYAEKLGVNIQDLLISQPDTGEQALEIADMLVRSGGVEIVVIDSVAALTPKAEIEGEMGDQLPGLQARLMSQALRKLTANIKRTNTLVIFINQIRMKIGVMFGSPETTTGGNALKFYASVRLDIRRTGAIKKGDEVVGSETRCKVVKNKVAPPFKEAHFDILYGEGISREGEIIDLGVQHKIVDKSGAWYAYKGEKIGQGKDNSREFLRANPALAREIENKVRAQVGLNAMAVEAAPAGVAPVEP</sequence>
<gene>
    <name evidence="1" type="primary">recA</name>
    <name type="ordered locus">AZOSEA19210</name>
    <name type="ORF">ebA3396</name>
</gene>
<protein>
    <recommendedName>
        <fullName evidence="1">Protein RecA</fullName>
    </recommendedName>
    <alternativeName>
        <fullName evidence="1">Recombinase A</fullName>
    </alternativeName>
</protein>
<proteinExistence type="inferred from homology"/>
<name>RECA_AROAE</name>
<reference key="1">
    <citation type="journal article" date="2005" name="Arch. Microbiol.">
        <title>The genome sequence of an anaerobic aromatic-degrading denitrifying bacterium, strain EbN1.</title>
        <authorList>
            <person name="Rabus R."/>
            <person name="Kube M."/>
            <person name="Heider J."/>
            <person name="Beck A."/>
            <person name="Heitmann K."/>
            <person name="Widdel F."/>
            <person name="Reinhardt R."/>
        </authorList>
    </citation>
    <scope>NUCLEOTIDE SEQUENCE [LARGE SCALE GENOMIC DNA]</scope>
    <source>
        <strain>DSM 19018 / LMG 30748 / EbN1</strain>
    </source>
</reference>
<feature type="chain" id="PRO_0000122646" description="Protein RecA">
    <location>
        <begin position="1"/>
        <end position="346"/>
    </location>
</feature>
<feature type="binding site" evidence="1">
    <location>
        <begin position="66"/>
        <end position="73"/>
    </location>
    <ligand>
        <name>ATP</name>
        <dbReference type="ChEBI" id="CHEBI:30616"/>
    </ligand>
</feature>